<proteinExistence type="inferred from homology"/>
<dbReference type="EC" id="6.3.2.9" evidence="1"/>
<dbReference type="EMBL" id="CP000577">
    <property type="protein sequence ID" value="ABN75890.1"/>
    <property type="molecule type" value="Genomic_DNA"/>
</dbReference>
<dbReference type="RefSeq" id="WP_011840598.1">
    <property type="nucleotide sequence ID" value="NC_009049.1"/>
</dbReference>
<dbReference type="SMR" id="A3PHS4"/>
<dbReference type="KEGG" id="rsh:Rsph17029_0779"/>
<dbReference type="HOGENOM" id="CLU_032540_3_0_5"/>
<dbReference type="UniPathway" id="UPA00219"/>
<dbReference type="GO" id="GO:0005737">
    <property type="term" value="C:cytoplasm"/>
    <property type="evidence" value="ECO:0007669"/>
    <property type="project" value="UniProtKB-SubCell"/>
</dbReference>
<dbReference type="GO" id="GO:0005524">
    <property type="term" value="F:ATP binding"/>
    <property type="evidence" value="ECO:0007669"/>
    <property type="project" value="UniProtKB-UniRule"/>
</dbReference>
<dbReference type="GO" id="GO:0008764">
    <property type="term" value="F:UDP-N-acetylmuramoylalanine-D-glutamate ligase activity"/>
    <property type="evidence" value="ECO:0007669"/>
    <property type="project" value="UniProtKB-UniRule"/>
</dbReference>
<dbReference type="GO" id="GO:0051301">
    <property type="term" value="P:cell division"/>
    <property type="evidence" value="ECO:0007669"/>
    <property type="project" value="UniProtKB-KW"/>
</dbReference>
<dbReference type="GO" id="GO:0071555">
    <property type="term" value="P:cell wall organization"/>
    <property type="evidence" value="ECO:0007669"/>
    <property type="project" value="UniProtKB-KW"/>
</dbReference>
<dbReference type="GO" id="GO:0009252">
    <property type="term" value="P:peptidoglycan biosynthetic process"/>
    <property type="evidence" value="ECO:0007669"/>
    <property type="project" value="UniProtKB-UniRule"/>
</dbReference>
<dbReference type="GO" id="GO:0008360">
    <property type="term" value="P:regulation of cell shape"/>
    <property type="evidence" value="ECO:0007669"/>
    <property type="project" value="UniProtKB-KW"/>
</dbReference>
<dbReference type="Gene3D" id="3.90.190.20">
    <property type="entry name" value="Mur ligase, C-terminal domain"/>
    <property type="match status" value="1"/>
</dbReference>
<dbReference type="Gene3D" id="3.40.1190.10">
    <property type="entry name" value="Mur-like, catalytic domain"/>
    <property type="match status" value="1"/>
</dbReference>
<dbReference type="Gene3D" id="3.40.50.720">
    <property type="entry name" value="NAD(P)-binding Rossmann-like Domain"/>
    <property type="match status" value="1"/>
</dbReference>
<dbReference type="HAMAP" id="MF_00639">
    <property type="entry name" value="MurD"/>
    <property type="match status" value="1"/>
</dbReference>
<dbReference type="InterPro" id="IPR036565">
    <property type="entry name" value="Mur-like_cat_sf"/>
</dbReference>
<dbReference type="InterPro" id="IPR004101">
    <property type="entry name" value="Mur_ligase_C"/>
</dbReference>
<dbReference type="InterPro" id="IPR036615">
    <property type="entry name" value="Mur_ligase_C_dom_sf"/>
</dbReference>
<dbReference type="InterPro" id="IPR013221">
    <property type="entry name" value="Mur_ligase_cen"/>
</dbReference>
<dbReference type="InterPro" id="IPR005762">
    <property type="entry name" value="MurD"/>
</dbReference>
<dbReference type="NCBIfam" id="TIGR01087">
    <property type="entry name" value="murD"/>
    <property type="match status" value="1"/>
</dbReference>
<dbReference type="PANTHER" id="PTHR43692">
    <property type="entry name" value="UDP-N-ACETYLMURAMOYLALANINE--D-GLUTAMATE LIGASE"/>
    <property type="match status" value="1"/>
</dbReference>
<dbReference type="PANTHER" id="PTHR43692:SF1">
    <property type="entry name" value="UDP-N-ACETYLMURAMOYLALANINE--D-GLUTAMATE LIGASE"/>
    <property type="match status" value="1"/>
</dbReference>
<dbReference type="Pfam" id="PF02875">
    <property type="entry name" value="Mur_ligase_C"/>
    <property type="match status" value="1"/>
</dbReference>
<dbReference type="Pfam" id="PF08245">
    <property type="entry name" value="Mur_ligase_M"/>
    <property type="match status" value="1"/>
</dbReference>
<dbReference type="Pfam" id="PF21799">
    <property type="entry name" value="MurD-like_N"/>
    <property type="match status" value="1"/>
</dbReference>
<dbReference type="SUPFAM" id="SSF51984">
    <property type="entry name" value="MurCD N-terminal domain"/>
    <property type="match status" value="1"/>
</dbReference>
<dbReference type="SUPFAM" id="SSF53623">
    <property type="entry name" value="MurD-like peptide ligases, catalytic domain"/>
    <property type="match status" value="1"/>
</dbReference>
<dbReference type="SUPFAM" id="SSF53244">
    <property type="entry name" value="MurD-like peptide ligases, peptide-binding domain"/>
    <property type="match status" value="1"/>
</dbReference>
<organism>
    <name type="scientific">Cereibacter sphaeroides (strain ATCC 17029 / ATH 2.4.9)</name>
    <name type="common">Rhodobacter sphaeroides</name>
    <dbReference type="NCBI Taxonomy" id="349101"/>
    <lineage>
        <taxon>Bacteria</taxon>
        <taxon>Pseudomonadati</taxon>
        <taxon>Pseudomonadota</taxon>
        <taxon>Alphaproteobacteria</taxon>
        <taxon>Rhodobacterales</taxon>
        <taxon>Paracoccaceae</taxon>
        <taxon>Cereibacter</taxon>
    </lineage>
</organism>
<protein>
    <recommendedName>
        <fullName evidence="1">UDP-N-acetylmuramoylalanine--D-glutamate ligase</fullName>
        <ecNumber evidence="1">6.3.2.9</ecNumber>
    </recommendedName>
    <alternativeName>
        <fullName evidence="1">D-glutamic acid-adding enzyme</fullName>
    </alternativeName>
    <alternativeName>
        <fullName evidence="1">UDP-N-acetylmuramoyl-L-alanyl-D-glutamate synthetase</fullName>
    </alternativeName>
</protein>
<gene>
    <name evidence="1" type="primary">murD</name>
    <name type="ordered locus">Rsph17029_0779</name>
</gene>
<comment type="function">
    <text evidence="1">Cell wall formation. Catalyzes the addition of glutamate to the nucleotide precursor UDP-N-acetylmuramoyl-L-alanine (UMA).</text>
</comment>
<comment type="catalytic activity">
    <reaction evidence="1">
        <text>UDP-N-acetyl-alpha-D-muramoyl-L-alanine + D-glutamate + ATP = UDP-N-acetyl-alpha-D-muramoyl-L-alanyl-D-glutamate + ADP + phosphate + H(+)</text>
        <dbReference type="Rhea" id="RHEA:16429"/>
        <dbReference type="ChEBI" id="CHEBI:15378"/>
        <dbReference type="ChEBI" id="CHEBI:29986"/>
        <dbReference type="ChEBI" id="CHEBI:30616"/>
        <dbReference type="ChEBI" id="CHEBI:43474"/>
        <dbReference type="ChEBI" id="CHEBI:83898"/>
        <dbReference type="ChEBI" id="CHEBI:83900"/>
        <dbReference type="ChEBI" id="CHEBI:456216"/>
        <dbReference type="EC" id="6.3.2.9"/>
    </reaction>
</comment>
<comment type="pathway">
    <text evidence="1">Cell wall biogenesis; peptidoglycan biosynthesis.</text>
</comment>
<comment type="subcellular location">
    <subcellularLocation>
        <location evidence="1">Cytoplasm</location>
    </subcellularLocation>
</comment>
<comment type="similarity">
    <text evidence="1">Belongs to the MurCDEF family.</text>
</comment>
<name>MURD_CERS1</name>
<accession>A3PHS4</accession>
<reference key="1">
    <citation type="submission" date="2007-02" db="EMBL/GenBank/DDBJ databases">
        <title>Complete sequence of chromosome 1 of Rhodobacter sphaeroides ATCC 17029.</title>
        <authorList>
            <person name="Copeland A."/>
            <person name="Lucas S."/>
            <person name="Lapidus A."/>
            <person name="Barry K."/>
            <person name="Detter J.C."/>
            <person name="Glavina del Rio T."/>
            <person name="Hammon N."/>
            <person name="Israni S."/>
            <person name="Dalin E."/>
            <person name="Tice H."/>
            <person name="Pitluck S."/>
            <person name="Kiss H."/>
            <person name="Brettin T."/>
            <person name="Bruce D."/>
            <person name="Han C."/>
            <person name="Tapia R."/>
            <person name="Gilna P."/>
            <person name="Schmutz J."/>
            <person name="Larimer F."/>
            <person name="Land M."/>
            <person name="Hauser L."/>
            <person name="Kyrpides N."/>
            <person name="Mikhailova N."/>
            <person name="Richardson P."/>
            <person name="Mackenzie C."/>
            <person name="Choudhary M."/>
            <person name="Donohue T.J."/>
            <person name="Kaplan S."/>
        </authorList>
    </citation>
    <scope>NUCLEOTIDE SEQUENCE [LARGE SCALE GENOMIC DNA]</scope>
    <source>
        <strain>ATCC 17029 / ATH 2.4.9</strain>
    </source>
</reference>
<evidence type="ECO:0000255" key="1">
    <source>
        <dbReference type="HAMAP-Rule" id="MF_00639"/>
    </source>
</evidence>
<feature type="chain" id="PRO_0000301448" description="UDP-N-acetylmuramoylalanine--D-glutamate ligase">
    <location>
        <begin position="1"/>
        <end position="465"/>
    </location>
</feature>
<feature type="binding site" evidence="1">
    <location>
        <begin position="127"/>
        <end position="133"/>
    </location>
    <ligand>
        <name>ATP</name>
        <dbReference type="ChEBI" id="CHEBI:30616"/>
    </ligand>
</feature>
<keyword id="KW-0067">ATP-binding</keyword>
<keyword id="KW-0131">Cell cycle</keyword>
<keyword id="KW-0132">Cell division</keyword>
<keyword id="KW-0133">Cell shape</keyword>
<keyword id="KW-0961">Cell wall biogenesis/degradation</keyword>
<keyword id="KW-0963">Cytoplasm</keyword>
<keyword id="KW-0436">Ligase</keyword>
<keyword id="KW-0547">Nucleotide-binding</keyword>
<keyword id="KW-0573">Peptidoglycan synthesis</keyword>
<sequence>MIPVRGLEGRKVAVLGLGRSGLATARALEAGGAEPLLWDDSPEARAKAEGQGFTVTDLTRERAFEGVALLVTSPGIPHLYPAPNPVIARAMAAGVPVDNDIGLFFRSFATRDWDAFDQMPRVVCVTGSNGKSTTTALIHHILSEAGRPTQMAGNIGRGVLDLDPARDGEVVVLELSSYQTDLARALTPDVAVFTNLSPDHLDRHGGMGGYFAAKRRLFAEGGPDRAVIGVDEPEGLYLAGQLSVAPEDDRVIRISAGQKLERFGWSVFARKGFLAEWRKGRQMASIDLRAMPGLPGAHNHQNACAAYAACRTLGLAPRQIEAALASFAGLPHRSQTVGEKGGVRFVNDSKATNVDSAAKALQAFPKIRWIAGGLGKDGGIAALQPHLGSVVKAYLIGHSARDFALQIGATDHEICETMERAVARAAEEAQPGEVVLLAPAAASFDQYPNFEKRGEDFMEKVKALL</sequence>